<evidence type="ECO:0000255" key="1"/>
<evidence type="ECO:0000305" key="2"/>
<name>GTRA_BPSF2</name>
<accession>O21942</accession>
<organism>
    <name type="scientific">Shigella phage SfII</name>
    <name type="common">Shigella flexneri bacteriophage II</name>
    <name type="synonym">Bacteriophage SfII</name>
    <dbReference type="NCBI Taxonomy" id="66284"/>
    <lineage>
        <taxon>Viruses</taxon>
        <taxon>Duplodnaviria</taxon>
        <taxon>Heunggongvirae</taxon>
        <taxon>Uroviricota</taxon>
        <taxon>Caudoviricetes</taxon>
    </lineage>
</organism>
<proteinExistence type="inferred from homology"/>
<gene>
    <name type="primary">gtrA</name>
</gene>
<keyword id="KW-0472">Membrane</keyword>
<keyword id="KW-0812">Transmembrane</keyword>
<keyword id="KW-1133">Transmembrane helix</keyword>
<keyword id="KW-0813">Transport</keyword>
<dbReference type="EMBL" id="AF021347">
    <property type="protein sequence ID" value="AAC39271.1"/>
    <property type="molecule type" value="Genomic_DNA"/>
</dbReference>
<dbReference type="RefSeq" id="YP_008318507.1">
    <property type="nucleotide sequence ID" value="NC_021857.1"/>
</dbReference>
<dbReference type="SMR" id="O21942"/>
<dbReference type="GeneID" id="16384914"/>
<dbReference type="KEGG" id="vg:16384914"/>
<dbReference type="OrthoDB" id="17195at10239"/>
<dbReference type="GO" id="GO:0005886">
    <property type="term" value="C:plasma membrane"/>
    <property type="evidence" value="ECO:0007669"/>
    <property type="project" value="TreeGrafter"/>
</dbReference>
<dbReference type="GO" id="GO:0000271">
    <property type="term" value="P:polysaccharide biosynthetic process"/>
    <property type="evidence" value="ECO:0007669"/>
    <property type="project" value="InterPro"/>
</dbReference>
<dbReference type="InterPro" id="IPR016480">
    <property type="entry name" value="Glc_translocase_bactprenl-link"/>
</dbReference>
<dbReference type="InterPro" id="IPR051401">
    <property type="entry name" value="GtrA_CellWall_Glycosyl"/>
</dbReference>
<dbReference type="InterPro" id="IPR007267">
    <property type="entry name" value="GtrA_DPMS_TM"/>
</dbReference>
<dbReference type="PANTHER" id="PTHR38459">
    <property type="entry name" value="PROPHAGE BACTOPRENOL-LINKED GLUCOSE TRANSLOCASE HOMOLOG"/>
    <property type="match status" value="1"/>
</dbReference>
<dbReference type="PANTHER" id="PTHR38459:SF1">
    <property type="entry name" value="PROPHAGE BACTOPRENOL-LINKED GLUCOSE TRANSLOCASE HOMOLOG"/>
    <property type="match status" value="1"/>
</dbReference>
<dbReference type="Pfam" id="PF04138">
    <property type="entry name" value="GtrA_DPMS_TM"/>
    <property type="match status" value="1"/>
</dbReference>
<dbReference type="PIRSF" id="PIRSF006298">
    <property type="entry name" value="GtrA_prd"/>
    <property type="match status" value="1"/>
</dbReference>
<protein>
    <recommendedName>
        <fullName>Bactoprenol-linked glucose translocase</fullName>
    </recommendedName>
</protein>
<organismHost>
    <name type="scientific">Shigella flexneri</name>
    <dbReference type="NCBI Taxonomy" id="623"/>
</organismHost>
<reference key="1">
    <citation type="journal article" date="1997" name="Mol. Microbiol.">
        <title>Mechanism of bacteriophage SfII-mediated serotype conversion in Shigella flexneri.</title>
        <authorList>
            <person name="Mavris M."/>
            <person name="Manning P.A."/>
            <person name="Morona R."/>
        </authorList>
    </citation>
    <scope>NUCLEOTIDE SEQUENCE [GENOMIC DNA]</scope>
</reference>
<comment type="function">
    <text>Involved in O antigen modification. Involved in the translocation of bactoprenol-linked glucose across the cytoplasmic membrane.</text>
</comment>
<comment type="subcellular location">
    <subcellularLocation>
        <location evidence="2">Membrane</location>
        <topology evidence="2">Multi-pass membrane protein</topology>
    </subcellularLocation>
</comment>
<comment type="similarity">
    <text evidence="2">Belongs to the GtrA family.</text>
</comment>
<sequence length="120" mass="13299">MLKLFVKYTSIGVLNTLIHWVVFGVCIYAAHTSQALANFTGFVVAVSFSFFANARFTFKASTTAMRYMYYVGFMGILSVIVGWAADKCSLPPIVTLITFSAISLVCGFVYSKFIVFRDAK</sequence>
<feature type="chain" id="PRO_0000212248" description="Bactoprenol-linked glucose translocase">
    <location>
        <begin position="1"/>
        <end position="120"/>
    </location>
</feature>
<feature type="transmembrane region" description="Helical" evidence="1">
    <location>
        <begin position="10"/>
        <end position="30"/>
    </location>
</feature>
<feature type="transmembrane region" description="Helical" evidence="1">
    <location>
        <begin position="34"/>
        <end position="54"/>
    </location>
</feature>
<feature type="transmembrane region" description="Helical" evidence="1">
    <location>
        <begin position="65"/>
        <end position="85"/>
    </location>
</feature>
<feature type="transmembrane region" description="Helical" evidence="1">
    <location>
        <begin position="90"/>
        <end position="110"/>
    </location>
</feature>